<accession>B1ZX44</accession>
<keyword id="KW-0963">Cytoplasm</keyword>
<keyword id="KW-1185">Reference proteome</keyword>
<keyword id="KW-0690">Ribosome biogenesis</keyword>
<dbReference type="EMBL" id="CP001032">
    <property type="protein sequence ID" value="ACB76096.1"/>
    <property type="molecule type" value="Genomic_DNA"/>
</dbReference>
<dbReference type="RefSeq" id="WP_012375631.1">
    <property type="nucleotide sequence ID" value="NC_010571.1"/>
</dbReference>
<dbReference type="SMR" id="B1ZX44"/>
<dbReference type="STRING" id="452637.Oter_2815"/>
<dbReference type="KEGG" id="ote:Oter_2815"/>
<dbReference type="eggNOG" id="COG0858">
    <property type="taxonomic scope" value="Bacteria"/>
</dbReference>
<dbReference type="HOGENOM" id="CLU_089475_1_1_0"/>
<dbReference type="OrthoDB" id="9793478at2"/>
<dbReference type="Proteomes" id="UP000007013">
    <property type="component" value="Chromosome"/>
</dbReference>
<dbReference type="GO" id="GO:0005829">
    <property type="term" value="C:cytosol"/>
    <property type="evidence" value="ECO:0007669"/>
    <property type="project" value="TreeGrafter"/>
</dbReference>
<dbReference type="GO" id="GO:0043024">
    <property type="term" value="F:ribosomal small subunit binding"/>
    <property type="evidence" value="ECO:0007669"/>
    <property type="project" value="TreeGrafter"/>
</dbReference>
<dbReference type="GO" id="GO:0030490">
    <property type="term" value="P:maturation of SSU-rRNA"/>
    <property type="evidence" value="ECO:0007669"/>
    <property type="project" value="UniProtKB-UniRule"/>
</dbReference>
<dbReference type="Gene3D" id="3.30.300.20">
    <property type="match status" value="1"/>
</dbReference>
<dbReference type="HAMAP" id="MF_00003">
    <property type="entry name" value="RbfA"/>
    <property type="match status" value="1"/>
</dbReference>
<dbReference type="InterPro" id="IPR015946">
    <property type="entry name" value="KH_dom-like_a/b"/>
</dbReference>
<dbReference type="InterPro" id="IPR000238">
    <property type="entry name" value="RbfA"/>
</dbReference>
<dbReference type="InterPro" id="IPR023799">
    <property type="entry name" value="RbfA_dom_sf"/>
</dbReference>
<dbReference type="NCBIfam" id="TIGR00082">
    <property type="entry name" value="rbfA"/>
    <property type="match status" value="1"/>
</dbReference>
<dbReference type="PANTHER" id="PTHR33515">
    <property type="entry name" value="RIBOSOME-BINDING FACTOR A, CHLOROPLASTIC-RELATED"/>
    <property type="match status" value="1"/>
</dbReference>
<dbReference type="PANTHER" id="PTHR33515:SF1">
    <property type="entry name" value="RIBOSOME-BINDING FACTOR A, CHLOROPLASTIC-RELATED"/>
    <property type="match status" value="1"/>
</dbReference>
<dbReference type="Pfam" id="PF02033">
    <property type="entry name" value="RBFA"/>
    <property type="match status" value="1"/>
</dbReference>
<dbReference type="SUPFAM" id="SSF89919">
    <property type="entry name" value="Ribosome-binding factor A, RbfA"/>
    <property type="match status" value="1"/>
</dbReference>
<evidence type="ECO:0000255" key="1">
    <source>
        <dbReference type="HAMAP-Rule" id="MF_00003"/>
    </source>
</evidence>
<protein>
    <recommendedName>
        <fullName evidence="1">Ribosome-binding factor A</fullName>
    </recommendedName>
</protein>
<proteinExistence type="inferred from homology"/>
<sequence length="122" mass="14312">MSNRTLRVNELIQRELSEILRKRYQSEATAITITELRVAPDLRDARVFVSIVGSAEEQDEKLRWLRAHAGELRYEVGRRIVLKYLPKFEYVLDHSPEKSARILQVLDEIDRQTPPRPEAEND</sequence>
<comment type="function">
    <text evidence="1">One of several proteins that assist in the late maturation steps of the functional core of the 30S ribosomal subunit. Associates with free 30S ribosomal subunits (but not with 30S subunits that are part of 70S ribosomes or polysomes). Required for efficient processing of 16S rRNA. May interact with the 5'-terminal helix region of 16S rRNA.</text>
</comment>
<comment type="subunit">
    <text evidence="1">Monomer. Binds 30S ribosomal subunits, but not 50S ribosomal subunits or 70S ribosomes.</text>
</comment>
<comment type="subcellular location">
    <subcellularLocation>
        <location evidence="1">Cytoplasm</location>
    </subcellularLocation>
</comment>
<comment type="similarity">
    <text evidence="1">Belongs to the RbfA family.</text>
</comment>
<gene>
    <name evidence="1" type="primary">rbfA</name>
    <name type="ordered locus">Oter_2815</name>
</gene>
<reference key="1">
    <citation type="journal article" date="2011" name="J. Bacteriol.">
        <title>Genome sequence of the verrucomicrobium Opitutus terrae PB90-1, an abundant inhabitant of rice paddy soil ecosystems.</title>
        <authorList>
            <person name="van Passel M.W."/>
            <person name="Kant R."/>
            <person name="Palva A."/>
            <person name="Copeland A."/>
            <person name="Lucas S."/>
            <person name="Lapidus A."/>
            <person name="Glavina del Rio T."/>
            <person name="Pitluck S."/>
            <person name="Goltsman E."/>
            <person name="Clum A."/>
            <person name="Sun H."/>
            <person name="Schmutz J."/>
            <person name="Larimer F.W."/>
            <person name="Land M.L."/>
            <person name="Hauser L."/>
            <person name="Kyrpides N."/>
            <person name="Mikhailova N."/>
            <person name="Richardson P.P."/>
            <person name="Janssen P.H."/>
            <person name="de Vos W.M."/>
            <person name="Smidt H."/>
        </authorList>
    </citation>
    <scope>NUCLEOTIDE SEQUENCE [LARGE SCALE GENOMIC DNA]</scope>
    <source>
        <strain>DSM 11246 / JCM 15787 / PB90-1</strain>
    </source>
</reference>
<name>RBFA_OPITP</name>
<feature type="chain" id="PRO_1000088911" description="Ribosome-binding factor A">
    <location>
        <begin position="1"/>
        <end position="122"/>
    </location>
</feature>
<organism>
    <name type="scientific">Opitutus terrae (strain DSM 11246 / JCM 15787 / PB90-1)</name>
    <dbReference type="NCBI Taxonomy" id="452637"/>
    <lineage>
        <taxon>Bacteria</taxon>
        <taxon>Pseudomonadati</taxon>
        <taxon>Verrucomicrobiota</taxon>
        <taxon>Opitutia</taxon>
        <taxon>Opitutales</taxon>
        <taxon>Opitutaceae</taxon>
        <taxon>Opitutus</taxon>
    </lineage>
</organism>